<protein>
    <recommendedName>
        <fullName evidence="1">Phosphopentomutase</fullName>
        <ecNumber evidence="1">5.4.2.7</ecNumber>
    </recommendedName>
    <alternativeName>
        <fullName evidence="1">Phosphodeoxyribomutase</fullName>
    </alternativeName>
</protein>
<proteinExistence type="inferred from homology"/>
<dbReference type="EC" id="5.4.2.7" evidence="1"/>
<dbReference type="EMBL" id="AP009240">
    <property type="protein sequence ID" value="BAG80182.1"/>
    <property type="molecule type" value="Genomic_DNA"/>
</dbReference>
<dbReference type="RefSeq" id="WP_000816471.1">
    <property type="nucleotide sequence ID" value="NC_011415.1"/>
</dbReference>
<dbReference type="SMR" id="B6I6N0"/>
<dbReference type="GeneID" id="89519362"/>
<dbReference type="KEGG" id="ecy:ECSE_4658"/>
<dbReference type="HOGENOM" id="CLU_053861_0_0_6"/>
<dbReference type="UniPathway" id="UPA00002">
    <property type="reaction ID" value="UER00467"/>
</dbReference>
<dbReference type="Proteomes" id="UP000008199">
    <property type="component" value="Chromosome"/>
</dbReference>
<dbReference type="GO" id="GO:0005829">
    <property type="term" value="C:cytosol"/>
    <property type="evidence" value="ECO:0007669"/>
    <property type="project" value="TreeGrafter"/>
</dbReference>
<dbReference type="GO" id="GO:0000287">
    <property type="term" value="F:magnesium ion binding"/>
    <property type="evidence" value="ECO:0007669"/>
    <property type="project" value="InterPro"/>
</dbReference>
<dbReference type="GO" id="GO:0030145">
    <property type="term" value="F:manganese ion binding"/>
    <property type="evidence" value="ECO:0007669"/>
    <property type="project" value="UniProtKB-UniRule"/>
</dbReference>
<dbReference type="GO" id="GO:0008973">
    <property type="term" value="F:phosphopentomutase activity"/>
    <property type="evidence" value="ECO:0007669"/>
    <property type="project" value="UniProtKB-UniRule"/>
</dbReference>
<dbReference type="GO" id="GO:0006018">
    <property type="term" value="P:2-deoxyribose 1-phosphate catabolic process"/>
    <property type="evidence" value="ECO:0007669"/>
    <property type="project" value="UniProtKB-UniRule"/>
</dbReference>
<dbReference type="GO" id="GO:0006015">
    <property type="term" value="P:5-phosphoribose 1-diphosphate biosynthetic process"/>
    <property type="evidence" value="ECO:0007669"/>
    <property type="project" value="UniProtKB-UniPathway"/>
</dbReference>
<dbReference type="GO" id="GO:0043094">
    <property type="term" value="P:metabolic compound salvage"/>
    <property type="evidence" value="ECO:0007669"/>
    <property type="project" value="InterPro"/>
</dbReference>
<dbReference type="GO" id="GO:0009117">
    <property type="term" value="P:nucleotide metabolic process"/>
    <property type="evidence" value="ECO:0007669"/>
    <property type="project" value="InterPro"/>
</dbReference>
<dbReference type="CDD" id="cd16009">
    <property type="entry name" value="PPM"/>
    <property type="match status" value="1"/>
</dbReference>
<dbReference type="FunFam" id="3.30.70.1250:FF:000001">
    <property type="entry name" value="Phosphopentomutase"/>
    <property type="match status" value="1"/>
</dbReference>
<dbReference type="Gene3D" id="3.40.720.10">
    <property type="entry name" value="Alkaline Phosphatase, subunit A"/>
    <property type="match status" value="1"/>
</dbReference>
<dbReference type="Gene3D" id="3.30.70.1250">
    <property type="entry name" value="Phosphopentomutase"/>
    <property type="match status" value="1"/>
</dbReference>
<dbReference type="HAMAP" id="MF_00740">
    <property type="entry name" value="Phosphopentomut"/>
    <property type="match status" value="1"/>
</dbReference>
<dbReference type="InterPro" id="IPR017850">
    <property type="entry name" value="Alkaline_phosphatase_core_sf"/>
</dbReference>
<dbReference type="InterPro" id="IPR010045">
    <property type="entry name" value="DeoB"/>
</dbReference>
<dbReference type="InterPro" id="IPR006124">
    <property type="entry name" value="Metalloenzyme"/>
</dbReference>
<dbReference type="InterPro" id="IPR024052">
    <property type="entry name" value="Phosphopentomutase_DeoB_cap_sf"/>
</dbReference>
<dbReference type="NCBIfam" id="TIGR01696">
    <property type="entry name" value="deoB"/>
    <property type="match status" value="1"/>
</dbReference>
<dbReference type="NCBIfam" id="NF003766">
    <property type="entry name" value="PRK05362.1"/>
    <property type="match status" value="1"/>
</dbReference>
<dbReference type="PANTHER" id="PTHR21110">
    <property type="entry name" value="PHOSPHOPENTOMUTASE"/>
    <property type="match status" value="1"/>
</dbReference>
<dbReference type="PANTHER" id="PTHR21110:SF0">
    <property type="entry name" value="PHOSPHOPENTOMUTASE"/>
    <property type="match status" value="1"/>
</dbReference>
<dbReference type="Pfam" id="PF01676">
    <property type="entry name" value="Metalloenzyme"/>
    <property type="match status" value="1"/>
</dbReference>
<dbReference type="PIRSF" id="PIRSF001491">
    <property type="entry name" value="Ppentomutase"/>
    <property type="match status" value="1"/>
</dbReference>
<dbReference type="SUPFAM" id="SSF53649">
    <property type="entry name" value="Alkaline phosphatase-like"/>
    <property type="match status" value="1"/>
</dbReference>
<dbReference type="SUPFAM" id="SSF143856">
    <property type="entry name" value="DeoB insert domain-like"/>
    <property type="match status" value="1"/>
</dbReference>
<sequence length="407" mass="44370">MKRAFIMVLDSFGIGATEDAERFGDVGADTLGHIAEACAKGEADNGRKGPLNLPNLTRLGLAKAHEGSTGFIPAGMDGNAEVIGAYAWAHEMSSGKDTPSGHWEIAGVPVLFEWGYFSDHENSFPQELLDKLVERANLPGYLGNCHSSGTVILDQLGEEHMKTGKPIFYTSADSVFQIACHEETFGLDKLYELCEIAREELTNGGYNIGRVIARPFIGDKAGNFQRTGNRHDLAVEPPAPTVLQKLVDEKHGQVVSVGKIADIYANCGITKKVKATGLDALFDATIKEMKEAGDNTIVFTNFVDFDSSWGHRRDVAGYAAGLELFDRRLPELMSLLRDDDILILTADHGCDPTWTGTDHTREHIPVLVYGPKVKPGSLGHRETFADIGQTLAKYFGTSDMEYGKAMF</sequence>
<accession>B6I6N0</accession>
<gene>
    <name evidence="1" type="primary">deoB</name>
    <name type="ordered locus">ECSE_4658</name>
</gene>
<comment type="function">
    <text evidence="1">Isomerase that catalyzes the conversion of deoxy-ribose 1-phosphate (dRib-1-P) and ribose 1-phosphate (Rib-1-P) to deoxy-ribose 5-phosphate (dRib-5-P) and ribose 5-phosphate (Rib-5-P), respectively.</text>
</comment>
<comment type="catalytic activity">
    <reaction evidence="1">
        <text>2-deoxy-alpha-D-ribose 1-phosphate = 2-deoxy-D-ribose 5-phosphate</text>
        <dbReference type="Rhea" id="RHEA:27658"/>
        <dbReference type="ChEBI" id="CHEBI:57259"/>
        <dbReference type="ChEBI" id="CHEBI:62877"/>
        <dbReference type="EC" id="5.4.2.7"/>
    </reaction>
</comment>
<comment type="catalytic activity">
    <reaction evidence="1">
        <text>alpha-D-ribose 1-phosphate = D-ribose 5-phosphate</text>
        <dbReference type="Rhea" id="RHEA:18793"/>
        <dbReference type="ChEBI" id="CHEBI:57720"/>
        <dbReference type="ChEBI" id="CHEBI:78346"/>
        <dbReference type="EC" id="5.4.2.7"/>
    </reaction>
</comment>
<comment type="cofactor">
    <cofactor evidence="1">
        <name>Mn(2+)</name>
        <dbReference type="ChEBI" id="CHEBI:29035"/>
    </cofactor>
    <text evidence="1">Binds 2 manganese ions.</text>
</comment>
<comment type="pathway">
    <text evidence="1">Carbohydrate degradation; 2-deoxy-D-ribose 1-phosphate degradation; D-glyceraldehyde 3-phosphate and acetaldehyde from 2-deoxy-alpha-D-ribose 1-phosphate: step 1/2.</text>
</comment>
<comment type="subcellular location">
    <subcellularLocation>
        <location evidence="1">Cytoplasm</location>
    </subcellularLocation>
</comment>
<comment type="similarity">
    <text evidence="1">Belongs to the phosphopentomutase family.</text>
</comment>
<name>DEOB_ECOSE</name>
<keyword id="KW-0963">Cytoplasm</keyword>
<keyword id="KW-0413">Isomerase</keyword>
<keyword id="KW-0464">Manganese</keyword>
<keyword id="KW-0479">Metal-binding</keyword>
<organism>
    <name type="scientific">Escherichia coli (strain SE11)</name>
    <dbReference type="NCBI Taxonomy" id="409438"/>
    <lineage>
        <taxon>Bacteria</taxon>
        <taxon>Pseudomonadati</taxon>
        <taxon>Pseudomonadota</taxon>
        <taxon>Gammaproteobacteria</taxon>
        <taxon>Enterobacterales</taxon>
        <taxon>Enterobacteriaceae</taxon>
        <taxon>Escherichia</taxon>
    </lineage>
</organism>
<feature type="chain" id="PRO_1000133074" description="Phosphopentomutase">
    <location>
        <begin position="1"/>
        <end position="407"/>
    </location>
</feature>
<feature type="binding site" evidence="1">
    <location>
        <position position="10"/>
    </location>
    <ligand>
        <name>Mn(2+)</name>
        <dbReference type="ChEBI" id="CHEBI:29035"/>
        <label>1</label>
    </ligand>
</feature>
<feature type="binding site" evidence="1">
    <location>
        <position position="306"/>
    </location>
    <ligand>
        <name>Mn(2+)</name>
        <dbReference type="ChEBI" id="CHEBI:29035"/>
        <label>2</label>
    </ligand>
</feature>
<feature type="binding site" evidence="1">
    <location>
        <position position="311"/>
    </location>
    <ligand>
        <name>Mn(2+)</name>
        <dbReference type="ChEBI" id="CHEBI:29035"/>
        <label>2</label>
    </ligand>
</feature>
<feature type="binding site" evidence="1">
    <location>
        <position position="347"/>
    </location>
    <ligand>
        <name>Mn(2+)</name>
        <dbReference type="ChEBI" id="CHEBI:29035"/>
        <label>1</label>
    </ligand>
</feature>
<feature type="binding site" evidence="1">
    <location>
        <position position="348"/>
    </location>
    <ligand>
        <name>Mn(2+)</name>
        <dbReference type="ChEBI" id="CHEBI:29035"/>
        <label>1</label>
    </ligand>
</feature>
<feature type="binding site" evidence="1">
    <location>
        <position position="359"/>
    </location>
    <ligand>
        <name>Mn(2+)</name>
        <dbReference type="ChEBI" id="CHEBI:29035"/>
        <label>2</label>
    </ligand>
</feature>
<reference key="1">
    <citation type="journal article" date="2008" name="DNA Res.">
        <title>Complete genome sequence and comparative analysis of the wild-type commensal Escherichia coli strain SE11 isolated from a healthy adult.</title>
        <authorList>
            <person name="Oshima K."/>
            <person name="Toh H."/>
            <person name="Ogura Y."/>
            <person name="Sasamoto H."/>
            <person name="Morita H."/>
            <person name="Park S.-H."/>
            <person name="Ooka T."/>
            <person name="Iyoda S."/>
            <person name="Taylor T.D."/>
            <person name="Hayashi T."/>
            <person name="Itoh K."/>
            <person name="Hattori M."/>
        </authorList>
    </citation>
    <scope>NUCLEOTIDE SEQUENCE [LARGE SCALE GENOMIC DNA]</scope>
    <source>
        <strain>SE11</strain>
    </source>
</reference>
<evidence type="ECO:0000255" key="1">
    <source>
        <dbReference type="HAMAP-Rule" id="MF_00740"/>
    </source>
</evidence>